<protein>
    <recommendedName>
        <fullName evidence="5">Secondary metabolism regulator LAE1</fullName>
    </recommendedName>
    <alternativeName>
        <fullName evidence="5">Methyltransferase LAE1</fullName>
        <ecNumber evidence="1">2.1.1.-</ecNumber>
    </alternativeName>
    <alternativeName>
        <fullName evidence="5">Velvet complex subunit LAE1</fullName>
    </alternativeName>
</protein>
<proteinExistence type="evidence at protein level"/>
<gene>
    <name evidence="4" type="primary">LAE1</name>
    <name type="ORF">FFUJ_00592</name>
</gene>
<feature type="chain" id="PRO_0000435749" description="Secondary metabolism regulator LAE1">
    <location>
        <begin position="1"/>
        <end position="316"/>
    </location>
</feature>
<evidence type="ECO:0000250" key="1">
    <source>
        <dbReference type="UniProtKB" id="C8VQG9"/>
    </source>
</evidence>
<evidence type="ECO:0000269" key="2">
    <source>
    </source>
</evidence>
<evidence type="ECO:0000269" key="3">
    <source>
    </source>
</evidence>
<evidence type="ECO:0000303" key="4">
    <source>
    </source>
</evidence>
<evidence type="ECO:0000305" key="5"/>
<dbReference type="EC" id="2.1.1.-" evidence="1"/>
<dbReference type="EMBL" id="FN548141">
    <property type="protein sequence ID" value="CBE54370.1"/>
    <property type="molecule type" value="Genomic_DNA"/>
</dbReference>
<dbReference type="EMBL" id="HF679023">
    <property type="protein sequence ID" value="CCT62818.1"/>
    <property type="status" value="ALT_SEQ"/>
    <property type="molecule type" value="Genomic_DNA"/>
</dbReference>
<dbReference type="SMR" id="S0DQI7"/>
<dbReference type="STRING" id="1279085.S0DQI7"/>
<dbReference type="EnsemblFungi" id="CCT62818">
    <property type="protein sequence ID" value="CCT62818"/>
    <property type="gene ID" value="FFUJ_00592"/>
</dbReference>
<dbReference type="HOGENOM" id="CLU_010595_2_0_1"/>
<dbReference type="Proteomes" id="UP000016800">
    <property type="component" value="Chromosome 1"/>
</dbReference>
<dbReference type="GO" id="GO:0005634">
    <property type="term" value="C:nucleus"/>
    <property type="evidence" value="ECO:0007669"/>
    <property type="project" value="UniProtKB-SubCell"/>
</dbReference>
<dbReference type="GO" id="GO:0008168">
    <property type="term" value="F:methyltransferase activity"/>
    <property type="evidence" value="ECO:0007669"/>
    <property type="project" value="UniProtKB-KW"/>
</dbReference>
<dbReference type="GO" id="GO:0032259">
    <property type="term" value="P:methylation"/>
    <property type="evidence" value="ECO:0007669"/>
    <property type="project" value="UniProtKB-KW"/>
</dbReference>
<dbReference type="GO" id="GO:0030435">
    <property type="term" value="P:sporulation resulting in formation of a cellular spore"/>
    <property type="evidence" value="ECO:0007669"/>
    <property type="project" value="UniProtKB-KW"/>
</dbReference>
<dbReference type="CDD" id="cd02440">
    <property type="entry name" value="AdoMet_MTases"/>
    <property type="match status" value="1"/>
</dbReference>
<dbReference type="Gene3D" id="3.40.50.150">
    <property type="entry name" value="Vaccinia Virus protein VP39"/>
    <property type="match status" value="1"/>
</dbReference>
<dbReference type="InterPro" id="IPR029063">
    <property type="entry name" value="SAM-dependent_MTases_sf"/>
</dbReference>
<dbReference type="Pfam" id="PF13489">
    <property type="entry name" value="Methyltransf_23"/>
    <property type="match status" value="1"/>
</dbReference>
<dbReference type="SUPFAM" id="SSF53335">
    <property type="entry name" value="S-adenosyl-L-methionine-dependent methyltransferases"/>
    <property type="match status" value="1"/>
</dbReference>
<comment type="function">
    <text evidence="1 2 3">Methyltransferase that performs automethylation (By similarity). No other methyl-accepting substrate has been identified yet (By similarity). Component of the velvet transcription factor complex that acts as a global regulator for secondary metabolite gene expression (PubMed:20572938). Controls the expression of the gibberellins gene clusters, but does not affect bikaverin production (PubMed:20572938). Controls the expression of the fusaric acid gene cluster (PubMed:24389666). Acts as a virulence factors during infection, most likely through activation of gibberellins biosynthesis (PubMed:20572938).</text>
</comment>
<comment type="catalytic activity">
    <reaction evidence="1">
        <text>L-methionyl-[protein] + S-adenosyl-L-methionine = S-methyl-L-methionyl-[protein] + S-adenosyl-L-homocysteine</text>
        <dbReference type="Rhea" id="RHEA:60560"/>
        <dbReference type="Rhea" id="RHEA-COMP:12313"/>
        <dbReference type="Rhea" id="RHEA-COMP:15592"/>
        <dbReference type="ChEBI" id="CHEBI:16044"/>
        <dbReference type="ChEBI" id="CHEBI:57856"/>
        <dbReference type="ChEBI" id="CHEBI:59789"/>
        <dbReference type="ChEBI" id="CHEBI:142742"/>
    </reaction>
    <physiologicalReaction direction="left-to-right" evidence="1">
        <dbReference type="Rhea" id="RHEA:60561"/>
    </physiologicalReaction>
</comment>
<comment type="subunit">
    <text evidence="1 2">Component of the heterotrimeric velvet complex composed of LAE1, VEL1 and VEL2; VEL1 acting as a bridging protein between LAE1 and VEL2 (By similarity). Interacts with VEL1 (PubMed:20572938).</text>
</comment>
<comment type="subcellular location">
    <subcellularLocation>
        <location evidence="2">Nucleus</location>
    </subcellularLocation>
</comment>
<comment type="induction">
    <text evidence="2">Expression is regulated by the VEL1 (PubMed:20572938).</text>
</comment>
<comment type="disruption phenotype">
    <text evidence="2 3">Reduces gibberellins production and subsequent virulence during infection (PubMed:20572938). Reduces both the fusaric acid gene cluster expression and production of fusaric acid (PubMed:24389666).</text>
</comment>
<comment type="similarity">
    <text evidence="5">Belongs to the methyltransferase superfamily. LaeA methyltransferase family.</text>
</comment>
<comment type="sequence caution" evidence="5">
    <conflict type="erroneous gene model prediction">
        <sequence resource="EMBL-CDS" id="CCT62818"/>
    </conflict>
</comment>
<organism>
    <name type="scientific">Gibberella fujikuroi (strain CBS 195.34 / IMI 58289 / NRRL A-6831)</name>
    <name type="common">Bakanae and foot rot disease fungus</name>
    <name type="synonym">Fusarium fujikuroi</name>
    <dbReference type="NCBI Taxonomy" id="1279085"/>
    <lineage>
        <taxon>Eukaryota</taxon>
        <taxon>Fungi</taxon>
        <taxon>Dikarya</taxon>
        <taxon>Ascomycota</taxon>
        <taxon>Pezizomycotina</taxon>
        <taxon>Sordariomycetes</taxon>
        <taxon>Hypocreomycetidae</taxon>
        <taxon>Hypocreales</taxon>
        <taxon>Nectriaceae</taxon>
        <taxon>Fusarium</taxon>
        <taxon>Fusarium fujikuroi species complex</taxon>
    </lineage>
</organism>
<sequence>MVVMPPQNSVNESEGRYLQDGFWQHGRFYGSWKPGKYLFPIDSEELNRLDIFHKVFLLARDNKPFLAPIRRTSPRIMDIGTGTGIWAINVAEECLSDAQIMAVDLNQIQPALIPPGFMPKQYDIEEPSWGPLLADCDLIHMRMLLGSIQTDLWPQVYHNAFEHLTPGIGFLEHIEVDWIPRCDDDERPANSAFVKWAELFLDGMDRFNRSVRVIPQEHRQMLEATGFTDVKQEVIKAYVCPWSADRNEREIARWFNIGLSHSLEAMSLKPLIEKLGFEAEDVRELCERAKRETCVLRYHTYCNIHVWTARKPGPQQ</sequence>
<name>LAEA_GIBF5</name>
<reference key="1">
    <citation type="journal article" date="2010" name="Mol. Microbiol.">
        <title>FfVel1 and FfLae1, components of a velvet-like complex in Fusarium fujikuroi, affect differentiation, secondary metabolism and virulence.</title>
        <authorList>
            <person name="Wiemann P."/>
            <person name="Brown D.W."/>
            <person name="Kleigrewe K."/>
            <person name="Bok J.W."/>
            <person name="Keller N.P."/>
            <person name="Humpf H.U."/>
            <person name="Tudzynski B."/>
        </authorList>
    </citation>
    <scope>NUCLEOTIDE SEQUENCE [GENOMIC DNA]</scope>
    <scope>INDUCTION</scope>
    <scope>SUBCELLULAR LOCATION</scope>
    <scope>INTERACTION WITH VEL1/VEA</scope>
    <scope>DISRUPTION PHENOTYPE</scope>
    <source>
        <strain>CBS 195.34 / IMI 58289 / NRRL A-6831</strain>
    </source>
</reference>
<reference key="2">
    <citation type="journal article" date="2013" name="PLoS Pathog.">
        <title>Deciphering the cryptic genome: genome-wide analyses of the rice pathogen Fusarium fujikuroi reveal complex regulation of secondary metabolism and novel metabolites.</title>
        <authorList>
            <person name="Wiemann P."/>
            <person name="Sieber C.M.K."/>
            <person name="von Bargen K.W."/>
            <person name="Studt L."/>
            <person name="Niehaus E.-M."/>
            <person name="Espino J.J."/>
            <person name="Huss K."/>
            <person name="Michielse C.B."/>
            <person name="Albermann S."/>
            <person name="Wagner D."/>
            <person name="Bergner S.V."/>
            <person name="Connolly L.R."/>
            <person name="Fischer A."/>
            <person name="Reuter G."/>
            <person name="Kleigrewe K."/>
            <person name="Bald T."/>
            <person name="Wingfield B.D."/>
            <person name="Ophir R."/>
            <person name="Freeman S."/>
            <person name="Hippler M."/>
            <person name="Smith K.M."/>
            <person name="Brown D.W."/>
            <person name="Proctor R.H."/>
            <person name="Muensterkoetter M."/>
            <person name="Freitag M."/>
            <person name="Humpf H.-U."/>
            <person name="Gueldener U."/>
            <person name="Tudzynski B."/>
        </authorList>
    </citation>
    <scope>NUCLEOTIDE SEQUENCE [LARGE SCALE GENOMIC DNA]</scope>
    <source>
        <strain>CBS 195.34 / IMI 58289 / NRRL A-6831</strain>
    </source>
</reference>
<reference key="3">
    <citation type="journal article" date="2014" name="Appl. Microbiol. Biotechnol.">
        <title>Characterization of the fusaric acid gene cluster in Fusarium fujikuroi.</title>
        <authorList>
            <person name="Niehaus E.M."/>
            <person name="von Bargen K.W."/>
            <person name="Espino J.J."/>
            <person name="Pfannmueller A."/>
            <person name="Humpf H.U."/>
            <person name="Tudzynski B."/>
        </authorList>
    </citation>
    <scope>FUNCTION</scope>
    <scope>DISRUPTION PHENOTYPE</scope>
</reference>
<keyword id="KW-0489">Methyltransferase</keyword>
<keyword id="KW-0539">Nucleus</keyword>
<keyword id="KW-1185">Reference proteome</keyword>
<keyword id="KW-0949">S-adenosyl-L-methionine</keyword>
<keyword id="KW-0749">Sporulation</keyword>
<keyword id="KW-0804">Transcription</keyword>
<keyword id="KW-0805">Transcription regulation</keyword>
<keyword id="KW-0808">Transferase</keyword>
<keyword id="KW-0843">Virulence</keyword>
<accession>S0DQI7</accession>
<accession>E0WDF6</accession>